<protein>
    <recommendedName>
        <fullName evidence="7">Protein EARLY STARVATION 1, chloroplastic</fullName>
        <shortName evidence="8">AtESV1</shortName>
    </recommendedName>
    <alternativeName>
        <fullName evidence="8">Protein REDUCED GRAVITROPIC 1</fullName>
    </alternativeName>
</protein>
<keyword id="KW-0150">Chloroplast</keyword>
<keyword id="KW-0934">Plastid</keyword>
<keyword id="KW-1185">Reference proteome</keyword>
<keyword id="KW-0809">Transit peptide</keyword>
<sequence length="426" mass="48975">MSEMAASSAISLLDIKLRRFGVGASNHELRLTKWFKGDQAGAPTRRFTCFADMLAPIRRSEKSEERRFDQKMSAHGAGIKTSSSAVPFASPKSRFLSKQEKFYPRCTPRLTGPQSRDTPPKRDTGIANEKDWGIDLLNENVNEAGTNEDGSSWFRESGHDLGDNGYRCRWSRMGGRSHDGSSEWTETWWEKSDWTGYKELGVEKSGKNSEGDSWWETWQEVLHQDEWSNLARIERSAQKQAKSGTENAGWYEKWWEKYDAKGWTEKGAHKYGRLNEQSWWEKWGEHYDGRGSVLKWTDKWAETELGTKWGDKWEEKFFSGIGSRQGETWHVSPNSDRWSRTWGEEHFGNGKVHKYGKSTTGESWDIVVDEETYYEAEPHYGWADVVGDSTQLLSIQPRERPPGVYPNLEFGPSPPPEPDLPPDQPQ</sequence>
<proteinExistence type="evidence at protein level"/>
<feature type="transit peptide" description="Chloroplast" evidence="1">
    <location>
        <begin position="1"/>
        <end position="58"/>
    </location>
</feature>
<feature type="chain" id="PRO_0000457399" description="Protein EARLY STARVATION 1, chloroplastic">
    <location>
        <begin position="59"/>
        <end position="426"/>
    </location>
</feature>
<feature type="region of interest" description="Disordered" evidence="2">
    <location>
        <begin position="106"/>
        <end position="127"/>
    </location>
</feature>
<feature type="region of interest" description="Disordered" evidence="2">
    <location>
        <begin position="396"/>
        <end position="426"/>
    </location>
</feature>
<feature type="compositionally biased region" description="Basic and acidic residues" evidence="2">
    <location>
        <begin position="118"/>
        <end position="127"/>
    </location>
</feature>
<feature type="compositionally biased region" description="Pro residues" evidence="2">
    <location>
        <begin position="412"/>
        <end position="426"/>
    </location>
</feature>
<comment type="function">
    <text evidence="3 4 5 6">Binds preferentially to highly ordered alpha-glucans, such as starch and crystalline maltodextrins (PubMed:29681129, PubMed:35665549). Involved in the organization of the starch granule matrix, thus influencing starch turnover by modulating the accessibility of starch polymers to modifying and degrading enzymes involved in phosphorylation, hydrolyzes and synthesis, including starch synthases (SSI and SSIII), starch phosphorylases (PHS1), isoamylase, beta-amylase, glucan water dikinase (GWD) and phosphoglucan water dikinase (PWD) (PubMed:27207856, PubMed:29681129, PubMed:35665549). Prevents GWD- and PWD-mediated starch phosphorylation, and subsequent degradation (PubMed:29681129). Required for the control of starch degradation in leaves and starch distribution in nonphotosynthetic parts (e.g. cells immediately adjacent to veins, columella cells of root caps, stems, flowers and siliques) by limiting the hasty depletion of starch reserves during the night (PubMed:27207856, PubMed:34367195). Promotes gravitropic responses, negative in shoots but positive in roots, by maintaining starch granules (statoliths) accumulation in hypocotyls and roots columella, especially in dark conditions and in the endodermis, where starch is formed from transported glucose-6-phosphates (PubMed:34367195).</text>
</comment>
<comment type="subcellular location">
    <subcellularLocation>
        <location evidence="3 4 5">Plastid</location>
        <location evidence="3 4 5">Chloroplast stroma</location>
    </subcellularLocation>
    <subcellularLocation>
        <location evidence="5">Plastid stroma</location>
    </subcellularLocation>
    <text evidence="3 4 5">Binds to starch granules in chloroplasts and plastids.</text>
</comment>
<comment type="developmental stage">
    <text evidence="5">Present in the chloroplasts of light-grown mesophyll cells and in the plastids of dark-grown upper hypocotyl endodermal cells possessing large starch granules (PubMed:34367195). In dark-grown hypocotyl epidermal cells that lack starch granules, localized to plastids stroma (PubMed:34367195).</text>
</comment>
<comment type="disruption phenotype">
    <text evidence="3 5">Reduced rosette size, wide stem angles and delayed flowering (PubMed:27207856). Rapidly degraded leaves starch in a nonlinear fashion during the night, so that reserves are exhausted 2 hours prior to dawn; this phenotype is probably due to an altered starch granule matrix organization (PubMed:27207856). Reduced starch content in nonphotosynthetic parts (e.g. cells immediately adjacent to veins, columella cells of root caps, stems, flowers and siliques) (PubMed:27207856). Absence of starch granules in hypocotyl endodermis and root columella leading to impaired endodermal plastids sedimentation and reduced hypocotyl negative gravitropism in the dark associated with reduced hypocotyl negative gravitropism but normal phototropism, leading to axillary branches with wider branch angles (PubMed:34367195). However, accumulation of starch granules in hypocotyl cortex and cotyledons at the end of long days (PubMed:34367195). In the double mutant esv1-2 lesv-1, starch is more rapidely degraded during the night (PubMed:27207856).</text>
</comment>
<comment type="similarity">
    <text evidence="9">Belongs to the ESV1 family.</text>
</comment>
<comment type="sequence caution" evidence="9">
    <conflict type="erroneous gene model prediction">
        <sequence resource="EMBL-CDS" id="AAF24535"/>
    </conflict>
</comment>
<evidence type="ECO:0000255" key="1"/>
<evidence type="ECO:0000256" key="2">
    <source>
        <dbReference type="SAM" id="MobiDB-lite"/>
    </source>
</evidence>
<evidence type="ECO:0000269" key="3">
    <source>
    </source>
</evidence>
<evidence type="ECO:0000269" key="4">
    <source>
    </source>
</evidence>
<evidence type="ECO:0000269" key="5">
    <source>
    </source>
</evidence>
<evidence type="ECO:0000269" key="6">
    <source>
    </source>
</evidence>
<evidence type="ECO:0000303" key="7">
    <source>
    </source>
</evidence>
<evidence type="ECO:0000303" key="8">
    <source>
    </source>
</evidence>
<evidence type="ECO:0000305" key="9"/>
<evidence type="ECO:0000312" key="10">
    <source>
        <dbReference type="Araport" id="AT1G42430"/>
    </source>
</evidence>
<evidence type="ECO:0000312" key="11">
    <source>
        <dbReference type="EMBL" id="AAF24535.1"/>
    </source>
</evidence>
<reference key="1">
    <citation type="journal article" date="2000" name="Nature">
        <title>Sequence and analysis of chromosome 1 of the plant Arabidopsis thaliana.</title>
        <authorList>
            <person name="Theologis A."/>
            <person name="Ecker J.R."/>
            <person name="Palm C.J."/>
            <person name="Federspiel N.A."/>
            <person name="Kaul S."/>
            <person name="White O."/>
            <person name="Alonso J."/>
            <person name="Altafi H."/>
            <person name="Araujo R."/>
            <person name="Bowman C.L."/>
            <person name="Brooks S.Y."/>
            <person name="Buehler E."/>
            <person name="Chan A."/>
            <person name="Chao Q."/>
            <person name="Chen H."/>
            <person name="Cheuk R.F."/>
            <person name="Chin C.W."/>
            <person name="Chung M.K."/>
            <person name="Conn L."/>
            <person name="Conway A.B."/>
            <person name="Conway A.R."/>
            <person name="Creasy T.H."/>
            <person name="Dewar K."/>
            <person name="Dunn P."/>
            <person name="Etgu P."/>
            <person name="Feldblyum T.V."/>
            <person name="Feng J.-D."/>
            <person name="Fong B."/>
            <person name="Fujii C.Y."/>
            <person name="Gill J.E."/>
            <person name="Goldsmith A.D."/>
            <person name="Haas B."/>
            <person name="Hansen N.F."/>
            <person name="Hughes B."/>
            <person name="Huizar L."/>
            <person name="Hunter J.L."/>
            <person name="Jenkins J."/>
            <person name="Johnson-Hopson C."/>
            <person name="Khan S."/>
            <person name="Khaykin E."/>
            <person name="Kim C.J."/>
            <person name="Koo H.L."/>
            <person name="Kremenetskaia I."/>
            <person name="Kurtz D.B."/>
            <person name="Kwan A."/>
            <person name="Lam B."/>
            <person name="Langin-Hooper S."/>
            <person name="Lee A."/>
            <person name="Lee J.M."/>
            <person name="Lenz C.A."/>
            <person name="Li J.H."/>
            <person name="Li Y.-P."/>
            <person name="Lin X."/>
            <person name="Liu S.X."/>
            <person name="Liu Z.A."/>
            <person name="Luros J.S."/>
            <person name="Maiti R."/>
            <person name="Marziali A."/>
            <person name="Militscher J."/>
            <person name="Miranda M."/>
            <person name="Nguyen M."/>
            <person name="Nierman W.C."/>
            <person name="Osborne B.I."/>
            <person name="Pai G."/>
            <person name="Peterson J."/>
            <person name="Pham P.K."/>
            <person name="Rizzo M."/>
            <person name="Rooney T."/>
            <person name="Rowley D."/>
            <person name="Sakano H."/>
            <person name="Salzberg S.L."/>
            <person name="Schwartz J.R."/>
            <person name="Shinn P."/>
            <person name="Southwick A.M."/>
            <person name="Sun H."/>
            <person name="Tallon L.J."/>
            <person name="Tambunga G."/>
            <person name="Toriumi M.J."/>
            <person name="Town C.D."/>
            <person name="Utterback T."/>
            <person name="Van Aken S."/>
            <person name="Vaysberg M."/>
            <person name="Vysotskaia V.S."/>
            <person name="Walker M."/>
            <person name="Wu D."/>
            <person name="Yu G."/>
            <person name="Fraser C.M."/>
            <person name="Venter J.C."/>
            <person name="Davis R.W."/>
        </authorList>
    </citation>
    <scope>NUCLEOTIDE SEQUENCE [LARGE SCALE GENOMIC DNA]</scope>
    <source>
        <strain>cv. Columbia</strain>
    </source>
</reference>
<reference key="2">
    <citation type="journal article" date="2017" name="Plant J.">
        <title>Araport11: a complete reannotation of the Arabidopsis thaliana reference genome.</title>
        <authorList>
            <person name="Cheng C.Y."/>
            <person name="Krishnakumar V."/>
            <person name="Chan A.P."/>
            <person name="Thibaud-Nissen F."/>
            <person name="Schobel S."/>
            <person name="Town C.D."/>
        </authorList>
    </citation>
    <scope>GENOME REANNOTATION</scope>
    <source>
        <strain>cv. Columbia</strain>
    </source>
</reference>
<reference key="3">
    <citation type="submission" date="2006-07" db="EMBL/GenBank/DDBJ databases">
        <title>Large-scale analysis of RIKEN Arabidopsis full-length (RAFL) cDNAs.</title>
        <authorList>
            <person name="Totoki Y."/>
            <person name="Seki M."/>
            <person name="Ishida J."/>
            <person name="Nakajima M."/>
            <person name="Enju A."/>
            <person name="Kamiya A."/>
            <person name="Narusaka M."/>
            <person name="Shin-i T."/>
            <person name="Nakagawa M."/>
            <person name="Sakamoto N."/>
            <person name="Oishi K."/>
            <person name="Kohara Y."/>
            <person name="Kobayashi M."/>
            <person name="Toyoda A."/>
            <person name="Sakaki Y."/>
            <person name="Sakurai T."/>
            <person name="Iida K."/>
            <person name="Akiyama K."/>
            <person name="Satou M."/>
            <person name="Toyoda T."/>
            <person name="Konagaya A."/>
            <person name="Carninci P."/>
            <person name="Kawai J."/>
            <person name="Hayashizaki Y."/>
            <person name="Shinozaki K."/>
        </authorList>
    </citation>
    <scope>NUCLEOTIDE SEQUENCE [LARGE SCALE MRNA]</scope>
    <source>
        <strain>cv. Columbia</strain>
    </source>
</reference>
<reference key="4">
    <citation type="journal article" date="2016" name="Plant Cell">
        <title>The starch granule-associated protein EARLY STARVATION1 is required for the control of starch degradation in Arabidopsis thaliana leaves.</title>
        <authorList>
            <person name="Feike D."/>
            <person name="Seung D."/>
            <person name="Graf A."/>
            <person name="Bischof S."/>
            <person name="Ellick T."/>
            <person name="Coiro M."/>
            <person name="Soyk S."/>
            <person name="Eicke S."/>
            <person name="Mettler-Altmann T."/>
            <person name="Lu K.J."/>
            <person name="Trick M."/>
            <person name="Zeeman S.C."/>
            <person name="Smith A.M."/>
        </authorList>
    </citation>
    <scope>FUNCTION</scope>
    <scope>DISRUPTION PHENOTYPE</scope>
    <scope>SUBCELLULAR LOCATION</scope>
    <source>
        <strain>cv. Columbia</strain>
        <strain>cv. Landsberg erecta</strain>
    </source>
</reference>
<reference key="5">
    <citation type="journal article" date="2018" name="Plant J.">
        <title>EARLY STARVATION1 specifically affects the phosphorylation action of starch-related dikinases.</title>
        <authorList>
            <person name="Malinova I."/>
            <person name="Mahto H."/>
            <person name="Brandt F."/>
            <person name="Al-Rawi S."/>
            <person name="Qasim H."/>
            <person name="Brust H."/>
            <person name="Hejazi M."/>
            <person name="Fettke J."/>
        </authorList>
    </citation>
    <scope>FUNCTION</scope>
    <scope>IDENTIFICATION BY MASS SPECTROMETRY</scope>
    <scope>SUBCELLULAR LOCATION</scope>
    <source>
        <strain>cv. Columbia</strain>
        <tissue>Leaf</tissue>
    </source>
</reference>
<reference key="6">
    <citation type="journal article" date="2021" name="Front. Plant Sci.">
        <title>EARLY STARVATION 1 is a functionally conserved protein promoting gravitropic responses in plants by forming starch granules.</title>
        <authorList>
            <person name="Song K."/>
            <person name="Lee D.-W."/>
            <person name="Kim J."/>
            <person name="Kim J."/>
            <person name="Guim H."/>
            <person name="Kim K."/>
            <person name="Jeon J.-S."/>
            <person name="Choi G."/>
        </authorList>
    </citation>
    <scope>FUNCTION</scope>
    <scope>DISRUPTION PHENOTYPE</scope>
    <scope>NOMENCLATURE</scope>
    <scope>SUBCELLULAR LOCATION</scope>
    <scope>DEVELOPMENTAL STAGE</scope>
    <source>
        <strain>cv. Columbia</strain>
    </source>
</reference>
<reference key="7">
    <citation type="journal article" date="2022" name="Plant J.">
        <title>LIKE EARLY STARVATION 1 alters the glucan structures at the starch granule surface and thereby influences the action of both starch-synthesizing and starch-degrading enzymes.</title>
        <authorList>
            <person name="Singh A."/>
            <person name="Compart J."/>
            <person name="Al-Rawi S.A."/>
            <person name="Mahto H."/>
            <person name="Ahmad A.M."/>
            <person name="Fettke J."/>
        </authorList>
    </citation>
    <scope>FUNCTION</scope>
    <source>
        <strain>cv. Columbia</strain>
    </source>
</reference>
<gene>
    <name evidence="7" type="primary">ESV1</name>
    <name evidence="8" type="synonym">RGV1</name>
    <name evidence="10" type="ordered locus">At1g42430</name>
    <name evidence="11" type="ORF">F7F22.5</name>
</gene>
<dbReference type="EMBL" id="AC007534">
    <property type="protein sequence ID" value="AAF24535.1"/>
    <property type="status" value="ALT_SEQ"/>
    <property type="molecule type" value="Genomic_DNA"/>
</dbReference>
<dbReference type="EMBL" id="CP002684">
    <property type="protein sequence ID" value="AEE31916.1"/>
    <property type="molecule type" value="Genomic_DNA"/>
</dbReference>
<dbReference type="EMBL" id="AK228784">
    <property type="status" value="NOT_ANNOTATED_CDS"/>
    <property type="molecule type" value="mRNA"/>
</dbReference>
<dbReference type="RefSeq" id="NP_174971.5">
    <property type="nucleotide sequence ID" value="NM_103431.7"/>
</dbReference>
<dbReference type="SASBDB" id="F4I9G2"/>
<dbReference type="FunCoup" id="F4I9G2">
    <property type="interactions" value="1128"/>
</dbReference>
<dbReference type="STRING" id="3702.F4I9G2"/>
<dbReference type="iPTMnet" id="F4I9G2"/>
<dbReference type="PaxDb" id="3702-AT1G42430.1"/>
<dbReference type="PRIDE" id="F4I9G2"/>
<dbReference type="ProteomicsDB" id="204210"/>
<dbReference type="DNASU" id="840847"/>
<dbReference type="EnsemblPlants" id="AT1G42430.1">
    <property type="protein sequence ID" value="AT1G42430.1"/>
    <property type="gene ID" value="AT1G42430"/>
</dbReference>
<dbReference type="GeneID" id="840847"/>
<dbReference type="Gramene" id="AT1G42430.1">
    <property type="protein sequence ID" value="AT1G42430.1"/>
    <property type="gene ID" value="AT1G42430"/>
</dbReference>
<dbReference type="KEGG" id="ath:AT1G42430"/>
<dbReference type="Araport" id="AT1G42430"/>
<dbReference type="TAIR" id="AT1G42430">
    <property type="gene designation" value="ESV1"/>
</dbReference>
<dbReference type="eggNOG" id="ENOG502QU89">
    <property type="taxonomic scope" value="Eukaryota"/>
</dbReference>
<dbReference type="InParanoid" id="F4I9G2"/>
<dbReference type="OrthoDB" id="343842at2759"/>
<dbReference type="PRO" id="PR:F4I9G2"/>
<dbReference type="Proteomes" id="UP000006548">
    <property type="component" value="Chromosome 1"/>
</dbReference>
<dbReference type="ExpressionAtlas" id="F4I9G2">
    <property type="expression patterns" value="baseline and differential"/>
</dbReference>
<dbReference type="GO" id="GO:0009570">
    <property type="term" value="C:chloroplast stroma"/>
    <property type="evidence" value="ECO:0000314"/>
    <property type="project" value="UniProtKB"/>
</dbReference>
<dbReference type="GO" id="GO:0043036">
    <property type="term" value="C:starch grain"/>
    <property type="evidence" value="ECO:0000314"/>
    <property type="project" value="UniProtKB"/>
</dbReference>
<dbReference type="GO" id="GO:2001070">
    <property type="term" value="F:starch binding"/>
    <property type="evidence" value="ECO:0000314"/>
    <property type="project" value="UniProtKB"/>
</dbReference>
<dbReference type="GO" id="GO:0009959">
    <property type="term" value="P:negative gravitropism"/>
    <property type="evidence" value="ECO:0000315"/>
    <property type="project" value="UniProtKB"/>
</dbReference>
<dbReference type="GO" id="GO:0009958">
    <property type="term" value="P:positive gravitropism"/>
    <property type="evidence" value="ECO:0000315"/>
    <property type="project" value="UniProtKB"/>
</dbReference>
<dbReference type="GO" id="GO:0032948">
    <property type="term" value="P:regulation of alpha-glucan metabolic process"/>
    <property type="evidence" value="ECO:0000314"/>
    <property type="project" value="UniProtKB"/>
</dbReference>
<dbReference type="GO" id="GO:2000904">
    <property type="term" value="P:regulation of starch metabolic process"/>
    <property type="evidence" value="ECO:0000314"/>
    <property type="project" value="UniProtKB"/>
</dbReference>
<dbReference type="GO" id="GO:0048316">
    <property type="term" value="P:seed development"/>
    <property type="evidence" value="ECO:0007669"/>
    <property type="project" value="EnsemblPlants"/>
</dbReference>
<dbReference type="GO" id="GO:0062052">
    <property type="term" value="P:starch granule initiation"/>
    <property type="evidence" value="ECO:0000315"/>
    <property type="project" value="UniProtKB"/>
</dbReference>
<dbReference type="InterPro" id="IPR052495">
    <property type="entry name" value="Alpha-glucan_binding_chloro"/>
</dbReference>
<dbReference type="PANTHER" id="PTHR34113">
    <property type="entry name" value="INACTIVE PURPLE ACID PHOSPHATASE-LIKE PROTEIN"/>
    <property type="match status" value="1"/>
</dbReference>
<dbReference type="PANTHER" id="PTHR34113:SF3">
    <property type="entry name" value="PROTEIN EARLY STARVATION 1, CHLOROPLASTIC"/>
    <property type="match status" value="1"/>
</dbReference>
<name>ESV1_ARATH</name>
<organism>
    <name type="scientific">Arabidopsis thaliana</name>
    <name type="common">Mouse-ear cress</name>
    <dbReference type="NCBI Taxonomy" id="3702"/>
    <lineage>
        <taxon>Eukaryota</taxon>
        <taxon>Viridiplantae</taxon>
        <taxon>Streptophyta</taxon>
        <taxon>Embryophyta</taxon>
        <taxon>Tracheophyta</taxon>
        <taxon>Spermatophyta</taxon>
        <taxon>Magnoliopsida</taxon>
        <taxon>eudicotyledons</taxon>
        <taxon>Gunneridae</taxon>
        <taxon>Pentapetalae</taxon>
        <taxon>rosids</taxon>
        <taxon>malvids</taxon>
        <taxon>Brassicales</taxon>
        <taxon>Brassicaceae</taxon>
        <taxon>Camelineae</taxon>
        <taxon>Arabidopsis</taxon>
    </lineage>
</organism>
<accession>F4I9G2</accession>
<accession>Q9SHN5</accession>